<proteinExistence type="inferred from homology"/>
<organism>
    <name type="scientific">Thermosynechococcus vestitus (strain NIES-2133 / IAM M-273 / BP-1)</name>
    <dbReference type="NCBI Taxonomy" id="197221"/>
    <lineage>
        <taxon>Bacteria</taxon>
        <taxon>Bacillati</taxon>
        <taxon>Cyanobacteriota</taxon>
        <taxon>Cyanophyceae</taxon>
        <taxon>Acaryochloridales</taxon>
        <taxon>Thermosynechococcaceae</taxon>
        <taxon>Thermosynechococcus</taxon>
    </lineage>
</organism>
<protein>
    <recommendedName>
        <fullName evidence="1">Nucleotide-binding protein tll0793</fullName>
    </recommendedName>
</protein>
<keyword id="KW-0547">Nucleotide-binding</keyword>
<keyword id="KW-1185">Reference proteome</keyword>
<reference key="1">
    <citation type="journal article" date="2002" name="DNA Res.">
        <title>Complete genome structure of the thermophilic cyanobacterium Thermosynechococcus elongatus BP-1.</title>
        <authorList>
            <person name="Nakamura Y."/>
            <person name="Kaneko T."/>
            <person name="Sato S."/>
            <person name="Ikeuchi M."/>
            <person name="Katoh H."/>
            <person name="Sasamoto S."/>
            <person name="Watanabe A."/>
            <person name="Iriguchi M."/>
            <person name="Kawashima K."/>
            <person name="Kimura T."/>
            <person name="Kishida Y."/>
            <person name="Kiyokawa C."/>
            <person name="Kohara M."/>
            <person name="Matsumoto M."/>
            <person name="Matsuno A."/>
            <person name="Nakazaki N."/>
            <person name="Shimpo S."/>
            <person name="Sugimoto M."/>
            <person name="Takeuchi C."/>
            <person name="Yamada M."/>
            <person name="Tabata S."/>
        </authorList>
    </citation>
    <scope>NUCLEOTIDE SEQUENCE [LARGE SCALE GENOMIC DNA]</scope>
    <source>
        <strain>NIES-2133 / IAM M-273 / BP-1</strain>
    </source>
</reference>
<feature type="chain" id="PRO_0000106203" description="Nucleotide-binding protein tll0793">
    <location>
        <begin position="1"/>
        <end position="163"/>
    </location>
</feature>
<sequence>MASTFSFDIVSDFDWQELVNAVDQTGREIKARYDLKDTQTALELTKEGLTIHTDSEFTLNSVQTILQQKAAKRQLSLKIFDYGPVEAAGGQRVKQLIKLRRGIPSELAKEISKLIRNEFKKVQASIQGDVVRVSAKSKDDLQAVIQRLKTQDYPVPLQFTNYR</sequence>
<comment type="function">
    <text evidence="1">Nucleotide-binding protein.</text>
</comment>
<comment type="similarity">
    <text evidence="1">Belongs to the YajQ family.</text>
</comment>
<name>Y793_THEVB</name>
<accession>Q8DKR4</accession>
<dbReference type="EMBL" id="BA000039">
    <property type="protein sequence ID" value="BAC08344.1"/>
    <property type="molecule type" value="Genomic_DNA"/>
</dbReference>
<dbReference type="RefSeq" id="NP_681582.1">
    <property type="nucleotide sequence ID" value="NC_004113.1"/>
</dbReference>
<dbReference type="RefSeq" id="WP_011056636.1">
    <property type="nucleotide sequence ID" value="NC_004113.1"/>
</dbReference>
<dbReference type="SMR" id="Q8DKR4"/>
<dbReference type="STRING" id="197221.gene:10747384"/>
<dbReference type="EnsemblBacteria" id="BAC08344">
    <property type="protein sequence ID" value="BAC08344"/>
    <property type="gene ID" value="BAC08344"/>
</dbReference>
<dbReference type="KEGG" id="tel:tll0793"/>
<dbReference type="PATRIC" id="fig|197221.4.peg.832"/>
<dbReference type="eggNOG" id="COG1666">
    <property type="taxonomic scope" value="Bacteria"/>
</dbReference>
<dbReference type="Proteomes" id="UP000000440">
    <property type="component" value="Chromosome"/>
</dbReference>
<dbReference type="GO" id="GO:0005829">
    <property type="term" value="C:cytosol"/>
    <property type="evidence" value="ECO:0007669"/>
    <property type="project" value="TreeGrafter"/>
</dbReference>
<dbReference type="GO" id="GO:0000166">
    <property type="term" value="F:nucleotide binding"/>
    <property type="evidence" value="ECO:0007669"/>
    <property type="project" value="TreeGrafter"/>
</dbReference>
<dbReference type="CDD" id="cd11740">
    <property type="entry name" value="YajQ_like"/>
    <property type="match status" value="1"/>
</dbReference>
<dbReference type="Gene3D" id="3.30.70.860">
    <property type="match status" value="1"/>
</dbReference>
<dbReference type="Gene3D" id="3.30.70.990">
    <property type="entry name" value="YajQ-like, domain 2"/>
    <property type="match status" value="1"/>
</dbReference>
<dbReference type="HAMAP" id="MF_00632">
    <property type="entry name" value="YajQ"/>
    <property type="match status" value="1"/>
</dbReference>
<dbReference type="InterPro" id="IPR007551">
    <property type="entry name" value="DUF520"/>
</dbReference>
<dbReference type="InterPro" id="IPR035571">
    <property type="entry name" value="UPF0234-like_C"/>
</dbReference>
<dbReference type="InterPro" id="IPR035570">
    <property type="entry name" value="UPF0234_N"/>
</dbReference>
<dbReference type="InterPro" id="IPR036183">
    <property type="entry name" value="YajQ-like_sf"/>
</dbReference>
<dbReference type="NCBIfam" id="NF003819">
    <property type="entry name" value="PRK05412.1"/>
    <property type="match status" value="1"/>
</dbReference>
<dbReference type="PANTHER" id="PTHR30476">
    <property type="entry name" value="UPF0234 PROTEIN YAJQ"/>
    <property type="match status" value="1"/>
</dbReference>
<dbReference type="PANTHER" id="PTHR30476:SF0">
    <property type="entry name" value="UPF0234 PROTEIN YAJQ"/>
    <property type="match status" value="1"/>
</dbReference>
<dbReference type="Pfam" id="PF04461">
    <property type="entry name" value="DUF520"/>
    <property type="match status" value="1"/>
</dbReference>
<dbReference type="SUPFAM" id="SSF89963">
    <property type="entry name" value="YajQ-like"/>
    <property type="match status" value="2"/>
</dbReference>
<evidence type="ECO:0000255" key="1">
    <source>
        <dbReference type="HAMAP-Rule" id="MF_00632"/>
    </source>
</evidence>
<gene>
    <name type="ordered locus">tll0793</name>
</gene>